<proteinExistence type="evidence at transcript level"/>
<protein>
    <recommendedName>
        <fullName>NADP-dependent malic enzyme</fullName>
        <shortName>NADP-ME</shortName>
        <ecNumber>1.1.1.40</ecNumber>
    </recommendedName>
</protein>
<organism>
    <name type="scientific">Phaseolus vulgaris</name>
    <name type="common">Kidney bean</name>
    <name type="synonym">French bean</name>
    <dbReference type="NCBI Taxonomy" id="3885"/>
    <lineage>
        <taxon>Eukaryota</taxon>
        <taxon>Viridiplantae</taxon>
        <taxon>Streptophyta</taxon>
        <taxon>Embryophyta</taxon>
        <taxon>Tracheophyta</taxon>
        <taxon>Spermatophyta</taxon>
        <taxon>Magnoliopsida</taxon>
        <taxon>eudicotyledons</taxon>
        <taxon>Gunneridae</taxon>
        <taxon>Pentapetalae</taxon>
        <taxon>rosids</taxon>
        <taxon>fabids</taxon>
        <taxon>Fabales</taxon>
        <taxon>Fabaceae</taxon>
        <taxon>Papilionoideae</taxon>
        <taxon>50 kb inversion clade</taxon>
        <taxon>NPAAA clade</taxon>
        <taxon>indigoferoid/millettioid clade</taxon>
        <taxon>Phaseoleae</taxon>
        <taxon>Phaseolus</taxon>
    </lineage>
</organism>
<name>MAOX_PHAVU</name>
<keyword id="KW-0963">Cytoplasm</keyword>
<keyword id="KW-0479">Metal-binding</keyword>
<keyword id="KW-0521">NADP</keyword>
<keyword id="KW-0560">Oxidoreductase</keyword>
<gene>
    <name type="primary">ME1</name>
</gene>
<reference key="1">
    <citation type="journal article" date="1988" name="Proc. Natl. Acad. Sci. U.S.A.">
        <title>Cinnamyl-alcohol dehydrogenase, a molecular marker specific for lignin synthesis: cDNA cloning and mRNA induction by fungal elicitor.</title>
        <authorList>
            <person name="Walter M.H."/>
            <person name="Grima-Pettenati J."/>
            <person name="Grand C."/>
            <person name="Boudet A.M."/>
            <person name="Lamb C.J."/>
        </authorList>
    </citation>
    <scope>NUCLEOTIDE SEQUENCE [MRNA]</scope>
</reference>
<reference key="2">
    <citation type="journal article" date="1994" name="Eur. J. Biochem.">
        <title>Characterization of a bean (Phaseolus vulgaris L.) malic-enzyme gene.</title>
        <authorList>
            <person name="Walter M.H."/>
            <person name="Grima-Pettenati J."/>
            <person name="Feuillet C."/>
        </authorList>
    </citation>
    <scope>NUCLEOTIDE SEQUENCE [GENOMIC DNA]</scope>
    <source>
        <strain>cv. Processor</strain>
        <tissue>Leaf</tissue>
    </source>
</reference>
<reference key="3">
    <citation type="journal article" date="1990" name="Plant Mol. Biol.">
        <title>Extensive sequence similarity of the bean CAD4 (cinnamyl-alcohol dehydrogenase) to a maize malic enzyme.</title>
        <authorList>
            <person name="Walter M.H."/>
            <person name="Grima-Pettenati J."/>
            <person name="Grand C."/>
            <person name="Boudet A.M."/>
            <person name="Lamb C.J."/>
        </authorList>
    </citation>
    <scope>SIMILARITY TO MALIC ENZYMES</scope>
</reference>
<sequence>MSSISLKENGGEVSVKKDYSNGGGVRDLYGEDSATEDHLITPWTFSVASGCSLLRDPRYNKGLAFTEGERDAHYLRGLLPPSVFNQELQEKRLMHNLRQYEVPLHRYMALMDLQERNERLFYKLLIDNVAELLPVVYTPTVGEACQKYGSIFRRPQGLYISLKEKGKILEVLKNWPEKSIQVIVVTDGERILGLGDLGCQGMGIPVGKLSLYTALGGVRPSSCLPVTIDVGTNNEKLLNDEFYIGLRQRRATGQEYATFLDEFMRAVKQNYGEKVLVQFEDFANHNAFDLLEKYSSSHLVFNDDIQGTASVVLAGLLASLKLVGGTLADHTFLFLGAGEAGTGIAELIAVEVSKQTKAPVEETRKKIWLVDSKGLIVSSRLESLQQFKKPWAHEHEPVKGLLEAVKAIKPTVLIGSSGAGKTFTKEVVETMASLNEKPLILALSNPTSQSECTAEEAYTWSKGRAIFASGSPFDPVEYEGKLFVPGQANNAYIFPGFGLGLIMSGAIRVRDEMLLAASEALAAQVSEENYDKGLIYPPFTNIRKISANIAAKVAAKAYDLGLASHLKRPKDLVKYAESCMYSPGYRSYR</sequence>
<evidence type="ECO:0000250" key="1"/>
<evidence type="ECO:0000305" key="2"/>
<evidence type="ECO:0000305" key="3">
    <source>
    </source>
</evidence>
<feature type="chain" id="PRO_0000160201" description="NADP-dependent malic enzyme">
    <location>
        <begin position="1"/>
        <end position="589"/>
    </location>
</feature>
<feature type="active site" description="Proton donor" evidence="1">
    <location>
        <position position="137"/>
    </location>
</feature>
<feature type="active site" description="Proton acceptor" evidence="1">
    <location>
        <position position="208"/>
    </location>
</feature>
<feature type="binding site" evidence="1">
    <location>
        <position position="190"/>
    </location>
    <ligand>
        <name>NAD(+)</name>
        <dbReference type="ChEBI" id="CHEBI:57540"/>
    </ligand>
</feature>
<feature type="binding site" evidence="1">
    <location>
        <position position="280"/>
    </location>
    <ligand>
        <name>a divalent metal cation</name>
        <dbReference type="ChEBI" id="CHEBI:60240"/>
    </ligand>
</feature>
<feature type="binding site" evidence="1">
    <location>
        <position position="281"/>
    </location>
    <ligand>
        <name>a divalent metal cation</name>
        <dbReference type="ChEBI" id="CHEBI:60240"/>
    </ligand>
</feature>
<feature type="binding site" evidence="1">
    <location>
        <position position="304"/>
    </location>
    <ligand>
        <name>a divalent metal cation</name>
        <dbReference type="ChEBI" id="CHEBI:60240"/>
    </ligand>
</feature>
<feature type="binding site" evidence="1">
    <location>
        <position position="304"/>
    </location>
    <ligand>
        <name>NAD(+)</name>
        <dbReference type="ChEBI" id="CHEBI:57540"/>
    </ligand>
</feature>
<feature type="binding site" evidence="1">
    <location>
        <begin position="333"/>
        <end position="349"/>
    </location>
    <ligand>
        <name>NADP(+)</name>
        <dbReference type="ChEBI" id="CHEBI:58349"/>
    </ligand>
</feature>
<feature type="binding site" evidence="1">
    <location>
        <position position="445"/>
    </location>
    <ligand>
        <name>NAD(+)</name>
        <dbReference type="ChEBI" id="CHEBI:57540"/>
    </ligand>
</feature>
<feature type="site" description="Important for activity" evidence="1">
    <location>
        <position position="304"/>
    </location>
</feature>
<feature type="sequence conflict" description="In Ref. 2; CAA56354." evidence="2" ref="2">
    <original>K</original>
    <variation>N</variation>
    <location>
        <position position="16"/>
    </location>
</feature>
<feature type="sequence conflict" description="In Ref. 2; CAA56354." evidence="2" ref="2">
    <original>A</original>
    <variation>E</variation>
    <location>
        <position position="130"/>
    </location>
</feature>
<feature type="sequence conflict" description="In Ref. 2; CAA56354." evidence="2" ref="2">
    <original>TF</original>
    <variation>EL</variation>
    <location>
        <begin position="258"/>
        <end position="259"/>
    </location>
</feature>
<feature type="sequence conflict" description="In Ref. 2; CAA56354." evidence="2" ref="2">
    <original>V</original>
    <variation>L</variation>
    <location>
        <position position="350"/>
    </location>
</feature>
<feature type="sequence conflict" description="In Ref. 2; CAA56354." evidence="2" ref="2">
    <original>K</original>
    <variation>P</variation>
    <location>
        <position position="567"/>
    </location>
</feature>
<dbReference type="EC" id="1.1.1.40"/>
<dbReference type="EMBL" id="J03825">
    <property type="protein sequence ID" value="AAA19575.1"/>
    <property type="molecule type" value="mRNA"/>
</dbReference>
<dbReference type="EMBL" id="X80051">
    <property type="protein sequence ID" value="CAA56354.1"/>
    <property type="molecule type" value="Genomic_DNA"/>
</dbReference>
<dbReference type="PIR" id="S48198">
    <property type="entry name" value="DEFBC"/>
</dbReference>
<dbReference type="SMR" id="P12628"/>
<dbReference type="ProMEX" id="P12628"/>
<dbReference type="eggNOG" id="KOG1257">
    <property type="taxonomic scope" value="Eukaryota"/>
</dbReference>
<dbReference type="GO" id="GO:0009507">
    <property type="term" value="C:chloroplast"/>
    <property type="evidence" value="ECO:0007669"/>
    <property type="project" value="TreeGrafter"/>
</dbReference>
<dbReference type="GO" id="GO:0004473">
    <property type="term" value="F:malate dehydrogenase (decarboxylating) (NADP+) activity"/>
    <property type="evidence" value="ECO:0007669"/>
    <property type="project" value="UniProtKB-EC"/>
</dbReference>
<dbReference type="GO" id="GO:0046872">
    <property type="term" value="F:metal ion binding"/>
    <property type="evidence" value="ECO:0007669"/>
    <property type="project" value="UniProtKB-KW"/>
</dbReference>
<dbReference type="GO" id="GO:0051287">
    <property type="term" value="F:NAD binding"/>
    <property type="evidence" value="ECO:0007669"/>
    <property type="project" value="InterPro"/>
</dbReference>
<dbReference type="GO" id="GO:0008948">
    <property type="term" value="F:oxaloacetate decarboxylase activity"/>
    <property type="evidence" value="ECO:0007669"/>
    <property type="project" value="RHEA"/>
</dbReference>
<dbReference type="GO" id="GO:0006108">
    <property type="term" value="P:malate metabolic process"/>
    <property type="evidence" value="ECO:0007669"/>
    <property type="project" value="UniProtKB-ARBA"/>
</dbReference>
<dbReference type="CDD" id="cd05312">
    <property type="entry name" value="NAD_bind_1_malic_enz"/>
    <property type="match status" value="1"/>
</dbReference>
<dbReference type="FunFam" id="3.40.50.10380:FF:000002">
    <property type="entry name" value="Malic enzyme"/>
    <property type="match status" value="1"/>
</dbReference>
<dbReference type="FunFam" id="3.40.50.720:FF:000067">
    <property type="entry name" value="Malic enzyme"/>
    <property type="match status" value="1"/>
</dbReference>
<dbReference type="Gene3D" id="3.40.50.10380">
    <property type="entry name" value="Malic enzyme, N-terminal domain"/>
    <property type="match status" value="1"/>
</dbReference>
<dbReference type="Gene3D" id="3.40.50.720">
    <property type="entry name" value="NAD(P)-binding Rossmann-like Domain"/>
    <property type="match status" value="1"/>
</dbReference>
<dbReference type="InterPro" id="IPR046346">
    <property type="entry name" value="Aminoacid_DH-like_N_sf"/>
</dbReference>
<dbReference type="InterPro" id="IPR015884">
    <property type="entry name" value="Malic_enzyme_CS"/>
</dbReference>
<dbReference type="InterPro" id="IPR012301">
    <property type="entry name" value="Malic_N_dom"/>
</dbReference>
<dbReference type="InterPro" id="IPR037062">
    <property type="entry name" value="Malic_N_dom_sf"/>
</dbReference>
<dbReference type="InterPro" id="IPR012302">
    <property type="entry name" value="Malic_NAD-bd"/>
</dbReference>
<dbReference type="InterPro" id="IPR001891">
    <property type="entry name" value="Malic_OxRdtase"/>
</dbReference>
<dbReference type="InterPro" id="IPR036291">
    <property type="entry name" value="NAD(P)-bd_dom_sf"/>
</dbReference>
<dbReference type="NCBIfam" id="NF010052">
    <property type="entry name" value="PRK13529.1"/>
    <property type="match status" value="1"/>
</dbReference>
<dbReference type="PANTHER" id="PTHR23406">
    <property type="entry name" value="MALIC ENZYME-RELATED"/>
    <property type="match status" value="1"/>
</dbReference>
<dbReference type="PANTHER" id="PTHR23406:SF64">
    <property type="entry name" value="NADP-DEPENDENT MALIC ENZYME 3"/>
    <property type="match status" value="1"/>
</dbReference>
<dbReference type="Pfam" id="PF00390">
    <property type="entry name" value="malic"/>
    <property type="match status" value="1"/>
</dbReference>
<dbReference type="Pfam" id="PF03949">
    <property type="entry name" value="Malic_M"/>
    <property type="match status" value="1"/>
</dbReference>
<dbReference type="PIRSF" id="PIRSF000106">
    <property type="entry name" value="ME"/>
    <property type="match status" value="1"/>
</dbReference>
<dbReference type="PRINTS" id="PR00072">
    <property type="entry name" value="MALOXRDTASE"/>
</dbReference>
<dbReference type="SMART" id="SM01274">
    <property type="entry name" value="malic"/>
    <property type="match status" value="1"/>
</dbReference>
<dbReference type="SMART" id="SM00919">
    <property type="entry name" value="Malic_M"/>
    <property type="match status" value="1"/>
</dbReference>
<dbReference type="SUPFAM" id="SSF53223">
    <property type="entry name" value="Aminoacid dehydrogenase-like, N-terminal domain"/>
    <property type="match status" value="1"/>
</dbReference>
<dbReference type="SUPFAM" id="SSF51735">
    <property type="entry name" value="NAD(P)-binding Rossmann-fold domains"/>
    <property type="match status" value="1"/>
</dbReference>
<dbReference type="PROSITE" id="PS00331">
    <property type="entry name" value="MALIC_ENZYMES"/>
    <property type="match status" value="1"/>
</dbReference>
<accession>P12628</accession>
<comment type="catalytic activity">
    <reaction>
        <text>(S)-malate + NADP(+) = pyruvate + CO2 + NADPH</text>
        <dbReference type="Rhea" id="RHEA:18253"/>
        <dbReference type="ChEBI" id="CHEBI:15361"/>
        <dbReference type="ChEBI" id="CHEBI:15589"/>
        <dbReference type="ChEBI" id="CHEBI:16526"/>
        <dbReference type="ChEBI" id="CHEBI:57783"/>
        <dbReference type="ChEBI" id="CHEBI:58349"/>
        <dbReference type="EC" id="1.1.1.40"/>
    </reaction>
</comment>
<comment type="catalytic activity">
    <reaction>
        <text>oxaloacetate + H(+) = pyruvate + CO2</text>
        <dbReference type="Rhea" id="RHEA:15641"/>
        <dbReference type="ChEBI" id="CHEBI:15361"/>
        <dbReference type="ChEBI" id="CHEBI:15378"/>
        <dbReference type="ChEBI" id="CHEBI:16452"/>
        <dbReference type="ChEBI" id="CHEBI:16526"/>
        <dbReference type="EC" id="1.1.1.40"/>
    </reaction>
</comment>
<comment type="cofactor">
    <cofactor evidence="1">
        <name>Mg(2+)</name>
        <dbReference type="ChEBI" id="CHEBI:18420"/>
    </cofactor>
    <cofactor evidence="1">
        <name>Mn(2+)</name>
        <dbReference type="ChEBI" id="CHEBI:29035"/>
    </cofactor>
    <text evidence="1">Divalent metal cations. Prefers magnesium or manganese.</text>
</comment>
<comment type="subunit">
    <text evidence="1">Homotetramer.</text>
</comment>
<comment type="subcellular location">
    <subcellularLocation>
        <location evidence="2">Cytoplasm</location>
    </subcellularLocation>
</comment>
<comment type="induction">
    <text>By fungal elicitor.</text>
</comment>
<comment type="similarity">
    <text evidence="2">Belongs to the malic enzymes family.</text>
</comment>
<comment type="caution">
    <text evidence="3">Was originally thought to be a cinnamyl-alcohol dehydrogenase.</text>
</comment>